<sequence>MSNVKDMSLAPSGHLKMEWAKRHMPVLCRIAEEFKNDKPFEGLTIGMALHLEAKTAILAETLLEGGAKIVITGCNPLSTQDDVAAACVEKGMEVYAWRGETNEEYYENLNKVLDSNPDIIIDDGADLIFLIHTERTELIGKIMGGCEETTTGIIRLKSMAEEGALKFPVVNVNDAYTKHLFDNRYGTGQSAMDGIIRTTNLLIAGKNVVVGGYGWCGRGVASRAAGHGANVIITEVNPIRALEAKMDGFTVLKMEEAAKIGDIFVTTTGCKDILRMEHFLLMKDGAVLSNAGHFDNEINKNDLKELSKSVKEARFNIEEYDLGNKKIYLLGEGRLVNLACADGHPCEVMDMSFANQALSAKFIKENKGKLENEVYEIPYEQDFKIALLKLHSMGADIDELSPEQRKYLSDWKEGT</sequence>
<proteinExistence type="evidence at protein level"/>
<reference key="1">
    <citation type="journal article" date="2004" name="J. Bacteriol.">
        <title>Complete genome sequence of the genetically tractable hydrogenotrophic methanogen Methanococcus maripaludis.</title>
        <authorList>
            <person name="Hendrickson E.L."/>
            <person name="Kaul R."/>
            <person name="Zhou Y."/>
            <person name="Bovee D."/>
            <person name="Chapman P."/>
            <person name="Chung J."/>
            <person name="Conway de Macario E."/>
            <person name="Dodsworth J.A."/>
            <person name="Gillett W."/>
            <person name="Graham D.E."/>
            <person name="Hackett M."/>
            <person name="Haydock A.K."/>
            <person name="Kang A."/>
            <person name="Land M.L."/>
            <person name="Levy R."/>
            <person name="Lie T.J."/>
            <person name="Major T.A."/>
            <person name="Moore B.C."/>
            <person name="Porat I."/>
            <person name="Palmeiri A."/>
            <person name="Rouse G."/>
            <person name="Saenphimmachak C."/>
            <person name="Soell D."/>
            <person name="Van Dien S."/>
            <person name="Wang T."/>
            <person name="Whitman W.B."/>
            <person name="Xia Q."/>
            <person name="Zhang Y."/>
            <person name="Larimer F.W."/>
            <person name="Olson M.V."/>
            <person name="Leigh J.A."/>
        </authorList>
    </citation>
    <scope>NUCLEOTIDE SEQUENCE [LARGE SCALE GENOMIC DNA]</scope>
    <source>
        <strain>DSM 14266 / JCM 13030 / NBRC 101832 / S2 / LL</strain>
    </source>
</reference>
<protein>
    <recommendedName>
        <fullName evidence="1">S-inosyl-L-homocysteine hydrolase</fullName>
        <shortName evidence="1">SIHH</shortName>
        <ecNumber evidence="1">3.13.1.9</ecNumber>
    </recommendedName>
</protein>
<organism>
    <name type="scientific">Methanococcus maripaludis (strain DSM 14266 / JCM 13030 / NBRC 101832 / S2 / LL)</name>
    <dbReference type="NCBI Taxonomy" id="267377"/>
    <lineage>
        <taxon>Archaea</taxon>
        <taxon>Methanobacteriati</taxon>
        <taxon>Methanobacteriota</taxon>
        <taxon>Methanomada group</taxon>
        <taxon>Methanococci</taxon>
        <taxon>Methanococcales</taxon>
        <taxon>Methanococcaceae</taxon>
        <taxon>Methanococcus</taxon>
    </lineage>
</organism>
<dbReference type="EC" id="3.13.1.9" evidence="1"/>
<dbReference type="EMBL" id="BX950229">
    <property type="protein sequence ID" value="CAF30476.1"/>
    <property type="molecule type" value="Genomic_DNA"/>
</dbReference>
<dbReference type="RefSeq" id="WP_011170864.1">
    <property type="nucleotide sequence ID" value="NC_005791.1"/>
</dbReference>
<dbReference type="PDB" id="7R3A">
    <property type="method" value="X-ray"/>
    <property type="resolution" value="2.53 A"/>
    <property type="chains" value="A/B/C/D/E/F/G/H=1-415"/>
</dbReference>
<dbReference type="PDBsum" id="7R3A"/>
<dbReference type="SMR" id="Q6LYR8"/>
<dbReference type="STRING" id="267377.MMP0920"/>
<dbReference type="EnsemblBacteria" id="CAF30476">
    <property type="protein sequence ID" value="CAF30476"/>
    <property type="gene ID" value="MMP0920"/>
</dbReference>
<dbReference type="GeneID" id="2761229"/>
<dbReference type="KEGG" id="mmp:MMP0920"/>
<dbReference type="PATRIC" id="fig|267377.15.peg.948"/>
<dbReference type="eggNOG" id="arCOG04137">
    <property type="taxonomic scope" value="Archaea"/>
</dbReference>
<dbReference type="HOGENOM" id="CLU_025194_2_1_2"/>
<dbReference type="OrthoDB" id="8479at2157"/>
<dbReference type="UniPathway" id="UPA00315"/>
<dbReference type="Proteomes" id="UP000000590">
    <property type="component" value="Chromosome"/>
</dbReference>
<dbReference type="GO" id="GO:0005829">
    <property type="term" value="C:cytosol"/>
    <property type="evidence" value="ECO:0007669"/>
    <property type="project" value="TreeGrafter"/>
</dbReference>
<dbReference type="GO" id="GO:0004013">
    <property type="term" value="F:adenosylhomocysteinase activity"/>
    <property type="evidence" value="ECO:0007669"/>
    <property type="project" value="TreeGrafter"/>
</dbReference>
<dbReference type="GO" id="GO:0016802">
    <property type="term" value="F:trialkylsulfonium hydrolase activity"/>
    <property type="evidence" value="ECO:0007669"/>
    <property type="project" value="UniProtKB-UniRule"/>
</dbReference>
<dbReference type="GO" id="GO:0006730">
    <property type="term" value="P:one-carbon metabolic process"/>
    <property type="evidence" value="ECO:0007669"/>
    <property type="project" value="UniProtKB-KW"/>
</dbReference>
<dbReference type="GO" id="GO:0006556">
    <property type="term" value="P:S-adenosylmethionine biosynthetic process"/>
    <property type="evidence" value="ECO:0007669"/>
    <property type="project" value="UniProtKB-UniRule"/>
</dbReference>
<dbReference type="GO" id="GO:0033353">
    <property type="term" value="P:S-adenosylmethionine cycle"/>
    <property type="evidence" value="ECO:0007669"/>
    <property type="project" value="TreeGrafter"/>
</dbReference>
<dbReference type="CDD" id="cd00401">
    <property type="entry name" value="SAHH"/>
    <property type="match status" value="1"/>
</dbReference>
<dbReference type="FunFam" id="3.40.50.720:FF:000004">
    <property type="entry name" value="Adenosylhomocysteinase"/>
    <property type="match status" value="1"/>
</dbReference>
<dbReference type="Gene3D" id="3.40.50.1480">
    <property type="entry name" value="Adenosylhomocysteinase-like"/>
    <property type="match status" value="1"/>
</dbReference>
<dbReference type="Gene3D" id="3.40.50.720">
    <property type="entry name" value="NAD(P)-binding Rossmann-like Domain"/>
    <property type="match status" value="1"/>
</dbReference>
<dbReference type="HAMAP" id="MF_00563">
    <property type="entry name" value="AdoHcyase"/>
    <property type="match status" value="1"/>
</dbReference>
<dbReference type="InterPro" id="IPR042172">
    <property type="entry name" value="Adenosylhomocyst_ase-like_sf"/>
</dbReference>
<dbReference type="InterPro" id="IPR000043">
    <property type="entry name" value="Adenosylhomocysteinase-like"/>
</dbReference>
<dbReference type="InterPro" id="IPR015878">
    <property type="entry name" value="Ado_hCys_hydrolase_NAD-bd"/>
</dbReference>
<dbReference type="InterPro" id="IPR036291">
    <property type="entry name" value="NAD(P)-bd_dom_sf"/>
</dbReference>
<dbReference type="InterPro" id="IPR020082">
    <property type="entry name" value="S-Ado-L-homoCys_hydrolase_CS"/>
</dbReference>
<dbReference type="NCBIfam" id="TIGR00936">
    <property type="entry name" value="ahcY"/>
    <property type="match status" value="1"/>
</dbReference>
<dbReference type="NCBIfam" id="NF004005">
    <property type="entry name" value="PRK05476.2-3"/>
    <property type="match status" value="1"/>
</dbReference>
<dbReference type="PANTHER" id="PTHR23420">
    <property type="entry name" value="ADENOSYLHOMOCYSTEINASE"/>
    <property type="match status" value="1"/>
</dbReference>
<dbReference type="PANTHER" id="PTHR23420:SF0">
    <property type="entry name" value="ADENOSYLHOMOCYSTEINASE"/>
    <property type="match status" value="1"/>
</dbReference>
<dbReference type="Pfam" id="PF05221">
    <property type="entry name" value="AdoHcyase"/>
    <property type="match status" value="2"/>
</dbReference>
<dbReference type="Pfam" id="PF00670">
    <property type="entry name" value="AdoHcyase_NAD"/>
    <property type="match status" value="1"/>
</dbReference>
<dbReference type="PIRSF" id="PIRSF001109">
    <property type="entry name" value="Ad_hcy_hydrolase"/>
    <property type="match status" value="1"/>
</dbReference>
<dbReference type="SMART" id="SM00996">
    <property type="entry name" value="AdoHcyase"/>
    <property type="match status" value="1"/>
</dbReference>
<dbReference type="SMART" id="SM00997">
    <property type="entry name" value="AdoHcyase_NAD"/>
    <property type="match status" value="1"/>
</dbReference>
<dbReference type="SUPFAM" id="SSF52283">
    <property type="entry name" value="Formate/glycerate dehydrogenase catalytic domain-like"/>
    <property type="match status" value="1"/>
</dbReference>
<dbReference type="SUPFAM" id="SSF51735">
    <property type="entry name" value="NAD(P)-binding Rossmann-fold domains"/>
    <property type="match status" value="1"/>
</dbReference>
<dbReference type="PROSITE" id="PS00738">
    <property type="entry name" value="ADOHCYASE_1"/>
    <property type="match status" value="1"/>
</dbReference>
<dbReference type="PROSITE" id="PS00739">
    <property type="entry name" value="ADOHCYASE_2"/>
    <property type="match status" value="1"/>
</dbReference>
<feature type="chain" id="PRO_0000117007" description="S-inosyl-L-homocysteine hydrolase">
    <location>
        <begin position="1"/>
        <end position="415"/>
    </location>
</feature>
<feature type="binding site" evidence="1">
    <location>
        <position position="123"/>
    </location>
    <ligand>
        <name>substrate</name>
    </ligand>
</feature>
<feature type="binding site" evidence="1">
    <location>
        <position position="148"/>
    </location>
    <ligand>
        <name>substrate</name>
    </ligand>
</feature>
<feature type="binding site" evidence="1">
    <location>
        <begin position="149"/>
        <end position="151"/>
    </location>
    <ligand>
        <name>NAD(+)</name>
        <dbReference type="ChEBI" id="CHEBI:57540"/>
    </ligand>
</feature>
<feature type="binding site" evidence="1">
    <location>
        <position position="178"/>
    </location>
    <ligand>
        <name>substrate</name>
    </ligand>
</feature>
<feature type="binding site" evidence="1">
    <location>
        <position position="182"/>
    </location>
    <ligand>
        <name>substrate</name>
    </ligand>
</feature>
<feature type="binding site" evidence="1">
    <location>
        <position position="183"/>
    </location>
    <ligand>
        <name>NAD(+)</name>
        <dbReference type="ChEBI" id="CHEBI:57540"/>
    </ligand>
</feature>
<feature type="binding site" evidence="1">
    <location>
        <begin position="212"/>
        <end position="217"/>
    </location>
    <ligand>
        <name>NAD(+)</name>
        <dbReference type="ChEBI" id="CHEBI:57540"/>
    </ligand>
</feature>
<feature type="binding site" evidence="1">
    <location>
        <position position="235"/>
    </location>
    <ligand>
        <name>NAD(+)</name>
        <dbReference type="ChEBI" id="CHEBI:57540"/>
    </ligand>
</feature>
<feature type="binding site" evidence="1">
    <location>
        <begin position="291"/>
        <end position="293"/>
    </location>
    <ligand>
        <name>NAD(+)</name>
        <dbReference type="ChEBI" id="CHEBI:57540"/>
    </ligand>
</feature>
<feature type="binding site" evidence="1">
    <location>
        <position position="337"/>
    </location>
    <ligand>
        <name>NAD(+)</name>
        <dbReference type="ChEBI" id="CHEBI:57540"/>
    </ligand>
</feature>
<feature type="helix" evidence="3">
    <location>
        <begin position="7"/>
        <end position="9"/>
    </location>
</feature>
<feature type="helix" evidence="3">
    <location>
        <begin position="10"/>
        <end position="21"/>
    </location>
</feature>
<feature type="helix" evidence="3">
    <location>
        <begin position="25"/>
        <end position="37"/>
    </location>
</feature>
<feature type="turn" evidence="3">
    <location>
        <begin position="39"/>
        <end position="42"/>
    </location>
</feature>
<feature type="strand" evidence="3">
    <location>
        <begin position="44"/>
        <end position="49"/>
    </location>
</feature>
<feature type="helix" evidence="3">
    <location>
        <begin position="53"/>
        <end position="64"/>
    </location>
</feature>
<feature type="strand" evidence="3">
    <location>
        <begin position="68"/>
        <end position="75"/>
    </location>
</feature>
<feature type="turn" evidence="3">
    <location>
        <begin position="76"/>
        <end position="78"/>
    </location>
</feature>
<feature type="helix" evidence="3">
    <location>
        <begin position="81"/>
        <end position="89"/>
    </location>
</feature>
<feature type="strand" evidence="3">
    <location>
        <begin position="93"/>
        <end position="95"/>
    </location>
</feature>
<feature type="helix" evidence="3">
    <location>
        <begin position="102"/>
        <end position="113"/>
    </location>
</feature>
<feature type="strand" evidence="3">
    <location>
        <begin position="118"/>
        <end position="125"/>
    </location>
</feature>
<feature type="helix" evidence="3">
    <location>
        <begin position="126"/>
        <end position="133"/>
    </location>
</feature>
<feature type="helix" evidence="3">
    <location>
        <begin position="136"/>
        <end position="138"/>
    </location>
</feature>
<feature type="turn" evidence="3">
    <location>
        <begin position="139"/>
        <end position="141"/>
    </location>
</feature>
<feature type="strand" evidence="3">
    <location>
        <begin position="144"/>
        <end position="147"/>
    </location>
</feature>
<feature type="helix" evidence="3">
    <location>
        <begin position="150"/>
        <end position="161"/>
    </location>
</feature>
<feature type="strand" evidence="3">
    <location>
        <begin position="169"/>
        <end position="171"/>
    </location>
</feature>
<feature type="helix" evidence="3">
    <location>
        <begin position="176"/>
        <end position="179"/>
    </location>
</feature>
<feature type="turn" evidence="3">
    <location>
        <begin position="180"/>
        <end position="184"/>
    </location>
</feature>
<feature type="helix" evidence="3">
    <location>
        <begin position="185"/>
        <end position="199"/>
    </location>
</feature>
<feature type="strand" evidence="3">
    <location>
        <begin position="207"/>
        <end position="211"/>
    </location>
</feature>
<feature type="helix" evidence="3">
    <location>
        <begin position="215"/>
        <end position="226"/>
    </location>
</feature>
<feature type="strand" evidence="3">
    <location>
        <begin position="230"/>
        <end position="234"/>
    </location>
</feature>
<feature type="helix" evidence="3">
    <location>
        <begin position="238"/>
        <end position="246"/>
    </location>
</feature>
<feature type="helix" evidence="3">
    <location>
        <begin position="254"/>
        <end position="257"/>
    </location>
</feature>
<feature type="turn" evidence="3">
    <location>
        <begin position="258"/>
        <end position="260"/>
    </location>
</feature>
<feature type="strand" evidence="3">
    <location>
        <begin position="262"/>
        <end position="266"/>
    </location>
</feature>
<feature type="strand" evidence="3">
    <location>
        <begin position="268"/>
        <end position="271"/>
    </location>
</feature>
<feature type="helix" evidence="3">
    <location>
        <begin position="276"/>
        <end position="281"/>
    </location>
</feature>
<feature type="strand" evidence="3">
    <location>
        <begin position="287"/>
        <end position="290"/>
    </location>
</feature>
<feature type="strand" evidence="3">
    <location>
        <begin position="292"/>
        <end position="294"/>
    </location>
</feature>
<feature type="helix" evidence="3">
    <location>
        <begin position="300"/>
        <end position="306"/>
    </location>
</feature>
<feature type="strand" evidence="3">
    <location>
        <begin position="308"/>
        <end position="314"/>
    </location>
</feature>
<feature type="strand" evidence="3">
    <location>
        <begin position="317"/>
        <end position="321"/>
    </location>
</feature>
<feature type="strand" evidence="3">
    <location>
        <begin position="326"/>
        <end position="330"/>
    </location>
</feature>
<feature type="helix" evidence="3">
    <location>
        <begin position="331"/>
        <end position="333"/>
    </location>
</feature>
<feature type="helix" evidence="3">
    <location>
        <begin position="336"/>
        <end position="339"/>
    </location>
</feature>
<feature type="helix" evidence="3">
    <location>
        <begin position="346"/>
        <end position="365"/>
    </location>
</feature>
<feature type="turn" evidence="3">
    <location>
        <begin position="366"/>
        <end position="369"/>
    </location>
</feature>
<feature type="strand" evidence="3">
    <location>
        <begin position="372"/>
        <end position="376"/>
    </location>
</feature>
<feature type="helix" evidence="3">
    <location>
        <begin position="379"/>
        <end position="392"/>
    </location>
</feature>
<feature type="helix" evidence="3">
    <location>
        <begin position="402"/>
        <end position="407"/>
    </location>
</feature>
<accession>Q6LYR8</accession>
<comment type="function">
    <text evidence="1">Catalyzes the hydrolysis of S-inosyl-L-homocysteine (SIH) to L-homocysteine (Hcy) and inosine. Likely functions in a S-adenosyl-L-methionine (SAM) recycling pathway from S-adenosyl-L-homocysteine (SAH) produced from SAM-dependent methylation reactions. Can also catalyze the reverse reaction in vitro, i.e. the synthesis of SIH from Hcy and inosine.</text>
</comment>
<comment type="catalytic activity">
    <reaction evidence="1">
        <text>S-inosyl-L-homocysteine + H2O = L-homocysteine + inosine</text>
        <dbReference type="Rhea" id="RHEA:59828"/>
        <dbReference type="ChEBI" id="CHEBI:15377"/>
        <dbReference type="ChEBI" id="CHEBI:17596"/>
        <dbReference type="ChEBI" id="CHEBI:57985"/>
        <dbReference type="ChEBI" id="CHEBI:58199"/>
        <dbReference type="EC" id="3.13.1.9"/>
    </reaction>
    <physiologicalReaction direction="left-to-right" evidence="1">
        <dbReference type="Rhea" id="RHEA:59829"/>
    </physiologicalReaction>
</comment>
<comment type="cofactor">
    <cofactor evidence="1">
        <name>NAD(+)</name>
        <dbReference type="ChEBI" id="CHEBI:57540"/>
    </cofactor>
    <text evidence="1">Binds 1 NAD(+) per subunit.</text>
</comment>
<comment type="pathway">
    <text evidence="1">Amino-acid biosynthesis; S-adenosyl-L-methionine biosynthesis.</text>
</comment>
<comment type="subcellular location">
    <subcellularLocation>
        <location evidence="1">Cytoplasm</location>
    </subcellularLocation>
</comment>
<comment type="miscellaneous">
    <text evidence="1">SAH is a product of SAM methyltransferases and is known to be a feedback inhibitor of these enzymes. As a result of this inhibition, organisms have evolved efficient enzymes to metabolize SAH via different pathways. The pathway found in methanogens differs from the canonical pathway, it uses the deamination of S-adenosyl-L-homocysteine to form S-inosyl-L-homocysteine for the regeneration of SAM from S-adenosyl-L-homocysteine.</text>
</comment>
<comment type="similarity">
    <text evidence="1">Belongs to the adenosylhomocysteinase family.</text>
</comment>
<evidence type="ECO:0000255" key="1">
    <source>
        <dbReference type="HAMAP-Rule" id="MF_00563"/>
    </source>
</evidence>
<evidence type="ECO:0000312" key="2">
    <source>
        <dbReference type="EMBL" id="CAF30476.1"/>
    </source>
</evidence>
<evidence type="ECO:0007829" key="3">
    <source>
        <dbReference type="PDB" id="7R3A"/>
    </source>
</evidence>
<name>SIHH_METMP</name>
<keyword id="KW-0002">3D-structure</keyword>
<keyword id="KW-0963">Cytoplasm</keyword>
<keyword id="KW-0378">Hydrolase</keyword>
<keyword id="KW-0520">NAD</keyword>
<keyword id="KW-0554">One-carbon metabolism</keyword>
<keyword id="KW-1185">Reference proteome</keyword>
<gene>
    <name evidence="2" type="primary">ahcY</name>
    <name type="ordered locus">MMP0920</name>
</gene>